<reference key="1">
    <citation type="journal article" date="2008" name="PLoS ONE">
        <title>A recalibrated molecular clock and independent origins for the cholera pandemic clones.</title>
        <authorList>
            <person name="Feng L."/>
            <person name="Reeves P.R."/>
            <person name="Lan R."/>
            <person name="Ren Y."/>
            <person name="Gao C."/>
            <person name="Zhou Z."/>
            <person name="Ren Y."/>
            <person name="Cheng J."/>
            <person name="Wang W."/>
            <person name="Wang J."/>
            <person name="Qian W."/>
            <person name="Li D."/>
            <person name="Wang L."/>
        </authorList>
    </citation>
    <scope>NUCLEOTIDE SEQUENCE [LARGE SCALE GENOMIC DNA]</scope>
    <source>
        <strain>M66-2</strain>
    </source>
</reference>
<organism>
    <name type="scientific">Vibrio cholerae serotype O1 (strain M66-2)</name>
    <dbReference type="NCBI Taxonomy" id="579112"/>
    <lineage>
        <taxon>Bacteria</taxon>
        <taxon>Pseudomonadati</taxon>
        <taxon>Pseudomonadota</taxon>
        <taxon>Gammaproteobacteria</taxon>
        <taxon>Vibrionales</taxon>
        <taxon>Vibrionaceae</taxon>
        <taxon>Vibrio</taxon>
    </lineage>
</organism>
<proteinExistence type="inferred from homology"/>
<sequence>MLNINSDAKLKDLLEFPCSFTYKVMGHAKPELPERVLEVIQRHAPGDYSPRVKPSAKGNYHSVSVTIHATSIEQVEILYKELGEIDIVRMVL</sequence>
<protein>
    <recommendedName>
        <fullName evidence="1">UPF0250 protein VCM66_0901</fullName>
    </recommendedName>
</protein>
<gene>
    <name type="ordered locus">VCM66_0901</name>
</gene>
<name>Y901_VIBCM</name>
<accession>C3LTJ3</accession>
<comment type="similarity">
    <text evidence="1">Belongs to the UPF0250 family.</text>
</comment>
<evidence type="ECO:0000255" key="1">
    <source>
        <dbReference type="HAMAP-Rule" id="MF_00659"/>
    </source>
</evidence>
<feature type="chain" id="PRO_1000200441" description="UPF0250 protein VCM66_0901">
    <location>
        <begin position="1"/>
        <end position="92"/>
    </location>
</feature>
<dbReference type="EMBL" id="CP001233">
    <property type="protein sequence ID" value="ACP05219.1"/>
    <property type="molecule type" value="Genomic_DNA"/>
</dbReference>
<dbReference type="SMR" id="C3LTJ3"/>
<dbReference type="KEGG" id="vcm:VCM66_0901"/>
<dbReference type="HOGENOM" id="CLU_161438_2_1_6"/>
<dbReference type="Proteomes" id="UP000001217">
    <property type="component" value="Chromosome I"/>
</dbReference>
<dbReference type="GO" id="GO:0005829">
    <property type="term" value="C:cytosol"/>
    <property type="evidence" value="ECO:0007669"/>
    <property type="project" value="TreeGrafter"/>
</dbReference>
<dbReference type="FunFam" id="3.30.70.260:FF:000002">
    <property type="entry name" value="UPF0250 protein YbeD"/>
    <property type="match status" value="1"/>
</dbReference>
<dbReference type="Gene3D" id="3.30.70.260">
    <property type="match status" value="1"/>
</dbReference>
<dbReference type="HAMAP" id="MF_00659">
    <property type="entry name" value="UPF0250"/>
    <property type="match status" value="1"/>
</dbReference>
<dbReference type="InterPro" id="IPR007454">
    <property type="entry name" value="UPF0250_YbeD-like"/>
</dbReference>
<dbReference type="InterPro" id="IPR027471">
    <property type="entry name" value="YbeD-like_sf"/>
</dbReference>
<dbReference type="NCBIfam" id="NF003447">
    <property type="entry name" value="PRK04998.1"/>
    <property type="match status" value="1"/>
</dbReference>
<dbReference type="PANTHER" id="PTHR38036">
    <property type="entry name" value="UPF0250 PROTEIN YBED"/>
    <property type="match status" value="1"/>
</dbReference>
<dbReference type="PANTHER" id="PTHR38036:SF1">
    <property type="entry name" value="UPF0250 PROTEIN YBED"/>
    <property type="match status" value="1"/>
</dbReference>
<dbReference type="Pfam" id="PF04359">
    <property type="entry name" value="DUF493"/>
    <property type="match status" value="1"/>
</dbReference>
<dbReference type="SUPFAM" id="SSF117991">
    <property type="entry name" value="YbeD/HP0495-like"/>
    <property type="match status" value="1"/>
</dbReference>